<dbReference type="EC" id="4.1.1.77"/>
<dbReference type="EMBL" id="AB020521">
    <property type="protein sequence ID" value="BAB03535.1"/>
    <property type="molecule type" value="Genomic_DNA"/>
</dbReference>
<dbReference type="PDB" id="8IH6">
    <property type="method" value="X-ray"/>
    <property type="resolution" value="2.52 A"/>
    <property type="chains" value="F/G/H/I/J=1-256"/>
</dbReference>
<dbReference type="PDBsum" id="8IH6"/>
<dbReference type="SMR" id="Q9KWS3"/>
<dbReference type="BioCyc" id="MetaCyc:MONOMER-14743"/>
<dbReference type="GO" id="GO:0005737">
    <property type="term" value="C:cytoplasm"/>
    <property type="evidence" value="ECO:0007669"/>
    <property type="project" value="TreeGrafter"/>
</dbReference>
<dbReference type="GO" id="GO:0008684">
    <property type="term" value="F:2-oxopent-4-enoate hydratase activity"/>
    <property type="evidence" value="ECO:0007669"/>
    <property type="project" value="TreeGrafter"/>
</dbReference>
<dbReference type="GO" id="GO:0047437">
    <property type="term" value="F:4-oxalocrotonate decarboxylase activity"/>
    <property type="evidence" value="ECO:0007669"/>
    <property type="project" value="UniProtKB-EC"/>
</dbReference>
<dbReference type="GO" id="GO:0009056">
    <property type="term" value="P:catabolic process"/>
    <property type="evidence" value="ECO:0007669"/>
    <property type="project" value="UniProtKB-KW"/>
</dbReference>
<dbReference type="Gene3D" id="3.90.850.10">
    <property type="entry name" value="Fumarylacetoacetase-like, C-terminal domain"/>
    <property type="match status" value="1"/>
</dbReference>
<dbReference type="InterPro" id="IPR011234">
    <property type="entry name" value="Fumarylacetoacetase-like_C"/>
</dbReference>
<dbReference type="InterPro" id="IPR036663">
    <property type="entry name" value="Fumarylacetoacetase_C_sf"/>
</dbReference>
<dbReference type="InterPro" id="IPR050772">
    <property type="entry name" value="Hydratase-Decarb/MhpD_sf"/>
</dbReference>
<dbReference type="PANTHER" id="PTHR30143:SF0">
    <property type="entry name" value="2-KETO-4-PENTENOATE HYDRATASE"/>
    <property type="match status" value="1"/>
</dbReference>
<dbReference type="PANTHER" id="PTHR30143">
    <property type="entry name" value="ACID HYDRATASE"/>
    <property type="match status" value="1"/>
</dbReference>
<dbReference type="Pfam" id="PF01557">
    <property type="entry name" value="FAA_hydrolase"/>
    <property type="match status" value="1"/>
</dbReference>
<dbReference type="SUPFAM" id="SSF56529">
    <property type="entry name" value="FAH"/>
    <property type="match status" value="1"/>
</dbReference>
<evidence type="ECO:0000269" key="1">
    <source>
    </source>
</evidence>
<evidence type="ECO:0000269" key="2">
    <source>
    </source>
</evidence>
<evidence type="ECO:0000305" key="3"/>
<proteinExistence type="evidence at protein level"/>
<sequence length="256" mass="27196">MKISRIAQRLDEAAVSGKATPQLTGDDAVTVREAAEIQRLLIAHRIERGARQVGLKMGFTSRAKMAQMGVSDLIWGRLTSDMWVEEGGEIDLAHYVHPRVEPEICYLLGKRLEGNVTPLEALAAVEAVAPAMEIIDSRYRDFKFSLPDVIADNASSSGFVVGAWHKPETDVSNLGMVMSFDGRAVELGTSAAILGSPIRALVAAARLAAQQGEALEAGSLILAGAATAAVALRPGISVRCEVQNLGSLSFSTTGER</sequence>
<keyword id="KW-0002">3D-structure</keyword>
<keyword id="KW-0058">Aromatic hydrocarbons catabolism</keyword>
<keyword id="KW-0903">Direct protein sequencing</keyword>
<keyword id="KW-0456">Lyase</keyword>
<keyword id="KW-0460">Magnesium</keyword>
<keyword id="KW-0464">Manganese</keyword>
<accession>Q9KWS3</accession>
<name>AMNE_PSESP</name>
<gene>
    <name type="primary">amnE</name>
</gene>
<feature type="chain" id="PRO_0000383024" description="4-oxalocrotonate decarboxylase">
    <location>
        <begin position="1"/>
        <end position="256"/>
    </location>
</feature>
<organism>
    <name type="scientific">Pseudomonas sp</name>
    <dbReference type="NCBI Taxonomy" id="306"/>
    <lineage>
        <taxon>Bacteria</taxon>
        <taxon>Pseudomonadati</taxon>
        <taxon>Pseudomonadota</taxon>
        <taxon>Gammaproteobacteria</taxon>
        <taxon>Pseudomonadales</taxon>
        <taxon>Pseudomonadaceae</taxon>
        <taxon>Pseudomonas</taxon>
    </lineage>
</organism>
<protein>
    <recommendedName>
        <fullName>4-oxalocrotonate decarboxylase</fullName>
        <ecNumber>4.1.1.77</ecNumber>
    </recommendedName>
</protein>
<reference key="1">
    <citation type="journal article" date="1997" name="J. Biol. Chem.">
        <title>Novel genes encoding 2-aminophenol 1,6-dioxygenase from Pseudomonas species AP-3 growing on 2-aminophenol and catalytic properties of the purified enzyme.</title>
        <authorList>
            <person name="Takenaka S."/>
            <person name="Murakami S."/>
            <person name="Shinke R."/>
            <person name="Hatakeyama K."/>
            <person name="Yukawa H."/>
            <person name="Aoki K."/>
        </authorList>
    </citation>
    <scope>NUCLEOTIDE SEQUENCE [GENOMIC DNA]</scope>
    <scope>FUNCTION</scope>
    <source>
        <strain>AP-3</strain>
    </source>
</reference>
<reference key="2">
    <citation type="journal article" date="2000" name="Arch. Microbiol.">
        <title>Complete nucleotide sequence and functional analysis of the genes for 2-aminophenol metabolism from Pseudomonas sp. AP-3.</title>
        <authorList>
            <person name="Takenaka S."/>
            <person name="Murakami S."/>
            <person name="Kim Y.J."/>
            <person name="Aoki K."/>
        </authorList>
    </citation>
    <scope>NUCLEOTIDE SEQUENCE [GENOMIC DNA]</scope>
    <scope>PROTEIN SEQUENCE OF 1-10</scope>
    <scope>BIOPHYSICOCHEMICAL PROPERTIES</scope>
    <scope>SUBUNIT</scope>
    <scope>COFACTOR</scope>
    <scope>ACTIVITY REGULATION</scope>
    <source>
        <strain>AP-3</strain>
    </source>
</reference>
<comment type="function">
    <text evidence="2">Involved in the modified meta-cleavage pathway for the 2-aminophenol catabolism.</text>
</comment>
<comment type="catalytic activity">
    <reaction>
        <text>(3E)-2-oxohex-3-enedioate + H(+) = 2-oxopent-4-enoate + CO2</text>
        <dbReference type="Rhea" id="RHEA:24260"/>
        <dbReference type="ChEBI" id="CHEBI:11641"/>
        <dbReference type="ChEBI" id="CHEBI:15378"/>
        <dbReference type="ChEBI" id="CHEBI:16526"/>
        <dbReference type="ChEBI" id="CHEBI:64908"/>
        <dbReference type="EC" id="4.1.1.77"/>
    </reaction>
</comment>
<comment type="cofactor">
    <cofactor evidence="1">
        <name>Mg(2+)</name>
        <dbReference type="ChEBI" id="CHEBI:18420"/>
    </cofactor>
    <cofactor evidence="1">
        <name>Mn(2+)</name>
        <dbReference type="ChEBI" id="CHEBI:29035"/>
    </cofactor>
</comment>
<comment type="activity regulation">
    <text evidence="1">Strongly inhibited by Fe(2+), Fe(3+), K(3)[Fe(CN)(6)], Ag(+) and Cu(2+).</text>
</comment>
<comment type="biophysicochemical properties">
    <phDependence>
        <text evidence="1">Optimum pH is 7.5. Stable in the range of pH 5.0-8.0.</text>
    </phDependence>
    <temperatureDependence>
        <text evidence="1">Stable up to 35 degrees Celsius.</text>
    </temperatureDependence>
</comment>
<comment type="subunit">
    <text evidence="1">Forms a complex with AmnF.</text>
</comment>
<comment type="similarity">
    <text evidence="3">Belongs to the hydratase/decarboxylase family.</text>
</comment>